<feature type="initiator methionine" description="Removed" evidence="3">
    <location>
        <position position="1"/>
    </location>
</feature>
<feature type="chain" id="PRO_0000071492" description="Protein phosphatase 1 regulatory subunit 14B">
    <location>
        <begin position="2"/>
        <end position="147"/>
    </location>
</feature>
<feature type="region of interest" description="Disordered" evidence="5">
    <location>
        <begin position="1"/>
        <end position="55"/>
    </location>
</feature>
<feature type="coiled-coil region" evidence="4">
    <location>
        <begin position="61"/>
        <end position="103"/>
    </location>
</feature>
<feature type="compositionally biased region" description="Low complexity" evidence="5">
    <location>
        <begin position="1"/>
        <end position="15"/>
    </location>
</feature>
<feature type="modified residue" description="N-acetylalanine" evidence="3">
    <location>
        <position position="2"/>
    </location>
</feature>
<feature type="modified residue" description="Phosphoserine" evidence="3">
    <location>
        <position position="21"/>
    </location>
</feature>
<feature type="modified residue" description="Phosphotyrosine" evidence="3">
    <location>
        <position position="29"/>
    </location>
</feature>
<feature type="modified residue" description="Phosphoserine" evidence="3">
    <location>
        <position position="32"/>
    </location>
</feature>
<feature type="modified residue" description="Phosphothreonine" evidence="2">
    <location>
        <position position="57"/>
    </location>
</feature>
<proteinExistence type="evidence at transcript level"/>
<evidence type="ECO:0000250" key="1"/>
<evidence type="ECO:0000250" key="2">
    <source>
        <dbReference type="UniProtKB" id="Q62084"/>
    </source>
</evidence>
<evidence type="ECO:0000250" key="3">
    <source>
        <dbReference type="UniProtKB" id="Q96C90"/>
    </source>
</evidence>
<evidence type="ECO:0000255" key="4"/>
<evidence type="ECO:0000256" key="5">
    <source>
        <dbReference type="SAM" id="MobiDB-lite"/>
    </source>
</evidence>
<evidence type="ECO:0000305" key="6"/>
<dbReference type="EMBL" id="AY122324">
    <property type="protein sequence ID" value="AAM89293.1"/>
    <property type="molecule type" value="mRNA"/>
</dbReference>
<dbReference type="RefSeq" id="NP_999280.1">
    <property type="nucleotide sequence ID" value="NM_214115.1"/>
</dbReference>
<dbReference type="FunCoup" id="Q8MIK9">
    <property type="interactions" value="460"/>
</dbReference>
<dbReference type="STRING" id="9823.ENSSSCP00000035611"/>
<dbReference type="PaxDb" id="9823-ENSSSCP00000013862"/>
<dbReference type="PeptideAtlas" id="Q8MIK9"/>
<dbReference type="Ensembl" id="ENSSSCT00025106307.1">
    <property type="protein sequence ID" value="ENSSSCP00025047694.1"/>
    <property type="gene ID" value="ENSSSCG00025076692.1"/>
</dbReference>
<dbReference type="Ensembl" id="ENSSSCT00030018541.1">
    <property type="protein sequence ID" value="ENSSSCP00030008217.1"/>
    <property type="gene ID" value="ENSSSCG00030013509.1"/>
</dbReference>
<dbReference type="Ensembl" id="ENSSSCT00035111297.1">
    <property type="protein sequence ID" value="ENSSSCP00035048717.1"/>
    <property type="gene ID" value="ENSSSCG00035081047.1"/>
</dbReference>
<dbReference type="Ensembl" id="ENSSSCT00040071237.1">
    <property type="protein sequence ID" value="ENSSSCP00040030384.1"/>
    <property type="gene ID" value="ENSSSCG00040052680.1"/>
</dbReference>
<dbReference type="Ensembl" id="ENSSSCT00045050098.1">
    <property type="protein sequence ID" value="ENSSSCP00045034856.1"/>
    <property type="gene ID" value="ENSSSCG00045029277.1"/>
</dbReference>
<dbReference type="Ensembl" id="ENSSSCT00050048170.1">
    <property type="protein sequence ID" value="ENSSSCP00050020039.1"/>
    <property type="gene ID" value="ENSSSCG00050035824.1"/>
</dbReference>
<dbReference type="Ensembl" id="ENSSSCT00055003887.1">
    <property type="protein sequence ID" value="ENSSSCP00055002965.1"/>
    <property type="gene ID" value="ENSSSCG00055002057.1"/>
</dbReference>
<dbReference type="Ensembl" id="ENSSSCT00060039398.1">
    <property type="protein sequence ID" value="ENSSSCP00060016699.1"/>
    <property type="gene ID" value="ENSSSCG00060029154.1"/>
</dbReference>
<dbReference type="Ensembl" id="ENSSSCT00065014286.1">
    <property type="protein sequence ID" value="ENSSSCP00065005816.1"/>
    <property type="gene ID" value="ENSSSCG00065010749.1"/>
</dbReference>
<dbReference type="Ensembl" id="ENSSSCT00070047663.1">
    <property type="protein sequence ID" value="ENSSSCP00070040225.1"/>
    <property type="gene ID" value="ENSSSCG00070023829.1"/>
</dbReference>
<dbReference type="Ensembl" id="ENSSSCT00115037681">
    <property type="protein sequence ID" value="ENSSSCP00115035600"/>
    <property type="gene ID" value="ENSSSCG00115021261"/>
</dbReference>
<dbReference type="GeneID" id="397205"/>
<dbReference type="KEGG" id="ssc:397205"/>
<dbReference type="CTD" id="26472"/>
<dbReference type="eggNOG" id="KOG0824">
    <property type="taxonomic scope" value="Eukaryota"/>
</dbReference>
<dbReference type="HOGENOM" id="CLU_114155_1_0_1"/>
<dbReference type="InParanoid" id="Q8MIK9"/>
<dbReference type="OMA" id="MWLFDEL"/>
<dbReference type="OrthoDB" id="8193882at2759"/>
<dbReference type="TreeFam" id="TF105546"/>
<dbReference type="Proteomes" id="UP000008227">
    <property type="component" value="Unplaced"/>
</dbReference>
<dbReference type="Proteomes" id="UP000314985">
    <property type="component" value="Chromosome 2"/>
</dbReference>
<dbReference type="Proteomes" id="UP000694570">
    <property type="component" value="Unplaced"/>
</dbReference>
<dbReference type="Proteomes" id="UP000694571">
    <property type="component" value="Unplaced"/>
</dbReference>
<dbReference type="Proteomes" id="UP000694720">
    <property type="component" value="Unplaced"/>
</dbReference>
<dbReference type="Proteomes" id="UP000694722">
    <property type="component" value="Unplaced"/>
</dbReference>
<dbReference type="Proteomes" id="UP000694723">
    <property type="component" value="Unplaced"/>
</dbReference>
<dbReference type="Proteomes" id="UP000694724">
    <property type="component" value="Unplaced"/>
</dbReference>
<dbReference type="Proteomes" id="UP000694725">
    <property type="component" value="Unplaced"/>
</dbReference>
<dbReference type="Proteomes" id="UP000694726">
    <property type="component" value="Unplaced"/>
</dbReference>
<dbReference type="Proteomes" id="UP000694727">
    <property type="component" value="Unplaced"/>
</dbReference>
<dbReference type="Proteomes" id="UP000694728">
    <property type="component" value="Unplaced"/>
</dbReference>
<dbReference type="Bgee" id="ENSSSCG00000037999">
    <property type="expression patterns" value="Expressed in hindlimb bud and 47 other cell types or tissues"/>
</dbReference>
<dbReference type="ExpressionAtlas" id="Q8MIK9">
    <property type="expression patterns" value="baseline and differential"/>
</dbReference>
<dbReference type="GO" id="GO:0005737">
    <property type="term" value="C:cytoplasm"/>
    <property type="evidence" value="ECO:0007669"/>
    <property type="project" value="UniProtKB-SubCell"/>
</dbReference>
<dbReference type="GO" id="GO:0004865">
    <property type="term" value="F:protein serine/threonine phosphatase inhibitor activity"/>
    <property type="evidence" value="ECO:0000318"/>
    <property type="project" value="GO_Central"/>
</dbReference>
<dbReference type="GO" id="GO:0045087">
    <property type="term" value="P:innate immune response"/>
    <property type="evidence" value="ECO:0000318"/>
    <property type="project" value="GO_Central"/>
</dbReference>
<dbReference type="FunFam" id="1.10.150.220:FF:000001">
    <property type="entry name" value="Phosphatase 1, regulatory (Inhibitor) subunit 14C"/>
    <property type="match status" value="1"/>
</dbReference>
<dbReference type="Gene3D" id="1.10.150.220">
    <property type="entry name" value="CPI-17"/>
    <property type="match status" value="1"/>
</dbReference>
<dbReference type="InterPro" id="IPR008025">
    <property type="entry name" value="CPI-17"/>
</dbReference>
<dbReference type="InterPro" id="IPR036658">
    <property type="entry name" value="CPI-17_sf"/>
</dbReference>
<dbReference type="PANTHER" id="PTHR16188">
    <property type="entry name" value="PROTEIN PHOSPHATASE 1 INHIBITOR POTENTIATED BY PROTEIN KINASE C"/>
    <property type="match status" value="1"/>
</dbReference>
<dbReference type="PANTHER" id="PTHR16188:SF5">
    <property type="entry name" value="PROTEIN PHOSPHATASE 1 REGULATORY SUBUNIT 14B"/>
    <property type="match status" value="1"/>
</dbReference>
<dbReference type="Pfam" id="PF05361">
    <property type="entry name" value="PP1_inhibitor"/>
    <property type="match status" value="1"/>
</dbReference>
<dbReference type="SUPFAM" id="SSF81790">
    <property type="entry name" value="Myosin phosphatase inhibitor 17kDa protein, CPI-17"/>
    <property type="match status" value="1"/>
</dbReference>
<sequence>MADSGPAGGAALAAPAPGPGSGGAGPRVYFQSPPGAAGEGPGGADDEGPVRRQGKVTVKYDRKELRKRLNLEEWILEQLTRLYDCQEEEIPELEIDVDELLDMESDDTRAARVKELLVDCYKPTEAFISGLLDKIRGMQKLSTPQKK</sequence>
<organism>
    <name type="scientific">Sus scrofa</name>
    <name type="common">Pig</name>
    <dbReference type="NCBI Taxonomy" id="9823"/>
    <lineage>
        <taxon>Eukaryota</taxon>
        <taxon>Metazoa</taxon>
        <taxon>Chordata</taxon>
        <taxon>Craniata</taxon>
        <taxon>Vertebrata</taxon>
        <taxon>Euteleostomi</taxon>
        <taxon>Mammalia</taxon>
        <taxon>Eutheria</taxon>
        <taxon>Laurasiatheria</taxon>
        <taxon>Artiodactyla</taxon>
        <taxon>Suina</taxon>
        <taxon>Suidae</taxon>
        <taxon>Sus</taxon>
    </lineage>
</organism>
<accession>Q8MIK9</accession>
<gene>
    <name type="primary">PPP1R14B</name>
    <name type="synonym">PHI1</name>
</gene>
<keyword id="KW-0007">Acetylation</keyword>
<keyword id="KW-0175">Coiled coil</keyword>
<keyword id="KW-0963">Cytoplasm</keyword>
<keyword id="KW-0597">Phosphoprotein</keyword>
<keyword id="KW-0650">Protein phosphatase inhibitor</keyword>
<keyword id="KW-1185">Reference proteome</keyword>
<protein>
    <recommendedName>
        <fullName>Protein phosphatase 1 regulatory subunit 14B</fullName>
    </recommendedName>
    <alternativeName>
        <fullName>Phosphatase holoenzyme inhibitor 1</fullName>
        <shortName>PHI-1</shortName>
    </alternativeName>
    <alternativeName>
        <fullName>Ubiquitous PKC-potentiated PP1 inhibitor</fullName>
    </alternativeName>
</protein>
<comment type="function">
    <text evidence="1">Inhibitor of PPP1CA. Has over 50-fold higher inhibitory activity when phosphorylated (By similarity).</text>
</comment>
<comment type="subcellular location">
    <subcellularLocation>
        <location evidence="6">Cytoplasm</location>
    </subcellularLocation>
</comment>
<comment type="PTM">
    <text evidence="1">Phosphorylated primarily on Thr-57 by PKC (in vitro). An unknown Ser is also phosphorylated by PKC (in vitro) (By similarity).</text>
</comment>
<comment type="similarity">
    <text evidence="6">Belongs to the PP1 inhibitor family.</text>
</comment>
<reference key="1">
    <citation type="journal article" date="2004" name="Biochem. J.">
        <title>GBPI, a novel gastrointestinal- and brain-specific PP1-inhibitory protein, is activated by PKC and inactivated by PKA.</title>
        <authorList>
            <person name="Liu Q.-R."/>
            <person name="Zhang P.-W."/>
            <person name="Lin Z."/>
            <person name="Li Q.-F."/>
            <person name="Woods A.S."/>
            <person name="Troncoso J."/>
            <person name="Uhl G.R."/>
        </authorList>
    </citation>
    <scope>NUCLEOTIDE SEQUENCE [MRNA]</scope>
</reference>
<name>PP14B_PIG</name>